<dbReference type="EC" id="6.3.2.1" evidence="1"/>
<dbReference type="EMBL" id="CP000814">
    <property type="protein sequence ID" value="ABV51873.1"/>
    <property type="molecule type" value="Genomic_DNA"/>
</dbReference>
<dbReference type="RefSeq" id="WP_002778123.1">
    <property type="nucleotide sequence ID" value="NC_009839.1"/>
</dbReference>
<dbReference type="SMR" id="A8FK86"/>
<dbReference type="GeneID" id="66544703"/>
<dbReference type="KEGG" id="cju:C8J_0274"/>
<dbReference type="HOGENOM" id="CLU_047148_0_0_7"/>
<dbReference type="UniPathway" id="UPA00028">
    <property type="reaction ID" value="UER00005"/>
</dbReference>
<dbReference type="GO" id="GO:0005829">
    <property type="term" value="C:cytosol"/>
    <property type="evidence" value="ECO:0007669"/>
    <property type="project" value="TreeGrafter"/>
</dbReference>
<dbReference type="GO" id="GO:0005524">
    <property type="term" value="F:ATP binding"/>
    <property type="evidence" value="ECO:0007669"/>
    <property type="project" value="UniProtKB-KW"/>
</dbReference>
<dbReference type="GO" id="GO:0004592">
    <property type="term" value="F:pantoate-beta-alanine ligase activity"/>
    <property type="evidence" value="ECO:0007669"/>
    <property type="project" value="UniProtKB-UniRule"/>
</dbReference>
<dbReference type="GO" id="GO:0015940">
    <property type="term" value="P:pantothenate biosynthetic process"/>
    <property type="evidence" value="ECO:0007669"/>
    <property type="project" value="UniProtKB-UniRule"/>
</dbReference>
<dbReference type="CDD" id="cd00560">
    <property type="entry name" value="PanC"/>
    <property type="match status" value="1"/>
</dbReference>
<dbReference type="FunFam" id="3.30.1300.10:FF:000001">
    <property type="entry name" value="Pantothenate synthetase"/>
    <property type="match status" value="1"/>
</dbReference>
<dbReference type="FunFam" id="3.40.50.620:FF:000013">
    <property type="entry name" value="Pantothenate synthetase"/>
    <property type="match status" value="1"/>
</dbReference>
<dbReference type="Gene3D" id="3.40.50.620">
    <property type="entry name" value="HUPs"/>
    <property type="match status" value="1"/>
</dbReference>
<dbReference type="Gene3D" id="3.30.1300.10">
    <property type="entry name" value="Pantoate-beta-alanine ligase, C-terminal domain"/>
    <property type="match status" value="1"/>
</dbReference>
<dbReference type="HAMAP" id="MF_00158">
    <property type="entry name" value="PanC"/>
    <property type="match status" value="1"/>
</dbReference>
<dbReference type="InterPro" id="IPR003721">
    <property type="entry name" value="Pantoate_ligase"/>
</dbReference>
<dbReference type="InterPro" id="IPR042176">
    <property type="entry name" value="Pantoate_ligase_C"/>
</dbReference>
<dbReference type="InterPro" id="IPR014729">
    <property type="entry name" value="Rossmann-like_a/b/a_fold"/>
</dbReference>
<dbReference type="NCBIfam" id="TIGR00018">
    <property type="entry name" value="panC"/>
    <property type="match status" value="1"/>
</dbReference>
<dbReference type="PANTHER" id="PTHR21299">
    <property type="entry name" value="CYTIDYLATE KINASE/PANTOATE-BETA-ALANINE LIGASE"/>
    <property type="match status" value="1"/>
</dbReference>
<dbReference type="PANTHER" id="PTHR21299:SF1">
    <property type="entry name" value="PANTOATE--BETA-ALANINE LIGASE"/>
    <property type="match status" value="1"/>
</dbReference>
<dbReference type="Pfam" id="PF02569">
    <property type="entry name" value="Pantoate_ligase"/>
    <property type="match status" value="1"/>
</dbReference>
<dbReference type="SUPFAM" id="SSF52374">
    <property type="entry name" value="Nucleotidylyl transferase"/>
    <property type="match status" value="1"/>
</dbReference>
<protein>
    <recommendedName>
        <fullName evidence="1">Pantothenate synthetase</fullName>
        <shortName evidence="1">PS</shortName>
        <ecNumber evidence="1">6.3.2.1</ecNumber>
    </recommendedName>
    <alternativeName>
        <fullName evidence="1">Pantoate--beta-alanine ligase</fullName>
    </alternativeName>
    <alternativeName>
        <fullName evidence="1">Pantoate-activating enzyme</fullName>
    </alternativeName>
</protein>
<accession>A8FK86</accession>
<reference key="1">
    <citation type="journal article" date="2007" name="J. Bacteriol.">
        <title>The complete genome sequence of Campylobacter jejuni strain 81116 (NCTC11828).</title>
        <authorList>
            <person name="Pearson B.M."/>
            <person name="Gaskin D.J.H."/>
            <person name="Segers R.P.A.M."/>
            <person name="Wells J.M."/>
            <person name="Nuijten P.J.M."/>
            <person name="van Vliet A.H.M."/>
        </authorList>
    </citation>
    <scope>NUCLEOTIDE SEQUENCE [LARGE SCALE GENOMIC DNA]</scope>
    <source>
        <strain>81116 / NCTC 11828</strain>
    </source>
</reference>
<feature type="chain" id="PRO_1000076849" description="Pantothenate synthetase">
    <location>
        <begin position="1"/>
        <end position="282"/>
    </location>
</feature>
<feature type="active site" description="Proton donor" evidence="1">
    <location>
        <position position="37"/>
    </location>
</feature>
<feature type="binding site" evidence="1">
    <location>
        <begin position="30"/>
        <end position="37"/>
    </location>
    <ligand>
        <name>ATP</name>
        <dbReference type="ChEBI" id="CHEBI:30616"/>
    </ligand>
</feature>
<feature type="binding site" evidence="1">
    <location>
        <position position="60"/>
    </location>
    <ligand>
        <name>(R)-pantoate</name>
        <dbReference type="ChEBI" id="CHEBI:15980"/>
    </ligand>
</feature>
<feature type="binding site" evidence="1">
    <location>
        <position position="60"/>
    </location>
    <ligand>
        <name>beta-alanine</name>
        <dbReference type="ChEBI" id="CHEBI:57966"/>
    </ligand>
</feature>
<feature type="binding site" evidence="1">
    <location>
        <begin position="146"/>
        <end position="149"/>
    </location>
    <ligand>
        <name>ATP</name>
        <dbReference type="ChEBI" id="CHEBI:30616"/>
    </ligand>
</feature>
<feature type="binding site" evidence="1">
    <location>
        <position position="152"/>
    </location>
    <ligand>
        <name>(R)-pantoate</name>
        <dbReference type="ChEBI" id="CHEBI:15980"/>
    </ligand>
</feature>
<feature type="binding site" evidence="1">
    <location>
        <position position="175"/>
    </location>
    <ligand>
        <name>ATP</name>
        <dbReference type="ChEBI" id="CHEBI:30616"/>
    </ligand>
</feature>
<feature type="binding site" evidence="1">
    <location>
        <begin position="183"/>
        <end position="186"/>
    </location>
    <ligand>
        <name>ATP</name>
        <dbReference type="ChEBI" id="CHEBI:30616"/>
    </ligand>
</feature>
<comment type="function">
    <text evidence="1">Catalyzes the condensation of pantoate with beta-alanine in an ATP-dependent reaction via a pantoyl-adenylate intermediate.</text>
</comment>
<comment type="catalytic activity">
    <reaction evidence="1">
        <text>(R)-pantoate + beta-alanine + ATP = (R)-pantothenate + AMP + diphosphate + H(+)</text>
        <dbReference type="Rhea" id="RHEA:10912"/>
        <dbReference type="ChEBI" id="CHEBI:15378"/>
        <dbReference type="ChEBI" id="CHEBI:15980"/>
        <dbReference type="ChEBI" id="CHEBI:29032"/>
        <dbReference type="ChEBI" id="CHEBI:30616"/>
        <dbReference type="ChEBI" id="CHEBI:33019"/>
        <dbReference type="ChEBI" id="CHEBI:57966"/>
        <dbReference type="ChEBI" id="CHEBI:456215"/>
        <dbReference type="EC" id="6.3.2.1"/>
    </reaction>
</comment>
<comment type="pathway">
    <text evidence="1">Cofactor biosynthesis; (R)-pantothenate biosynthesis; (R)-pantothenate from (R)-pantoate and beta-alanine: step 1/1.</text>
</comment>
<comment type="subunit">
    <text evidence="1">Homodimer.</text>
</comment>
<comment type="subcellular location">
    <subcellularLocation>
        <location evidence="1">Cytoplasm</location>
    </subcellularLocation>
</comment>
<comment type="miscellaneous">
    <text evidence="1">The reaction proceeds by a bi uni uni bi ping pong mechanism.</text>
</comment>
<comment type="similarity">
    <text evidence="1">Belongs to the pantothenate synthetase family.</text>
</comment>
<proteinExistence type="inferred from homology"/>
<gene>
    <name evidence="1" type="primary">panC</name>
    <name type="ordered locus">C8J_0274</name>
</gene>
<name>PANC_CAMJ8</name>
<keyword id="KW-0067">ATP-binding</keyword>
<keyword id="KW-0963">Cytoplasm</keyword>
<keyword id="KW-0436">Ligase</keyword>
<keyword id="KW-0547">Nucleotide-binding</keyword>
<keyword id="KW-0566">Pantothenate biosynthesis</keyword>
<sequence>MQVITSVKEAKQIVKDWKSHQLSIGYVPTMGFLHDGHLSLVKHAKTQDKVIVSIFVNPMQFGPNEDFSSYPRDLERDIKMCQDNGVDMVFIPDATQMYLKNFSTYVDMNTITDKLCGAKRPGHFRGVCTVLTKFFNILNPDIVYMGQKDAQQCVVVRHMVDDLNFDLKIQICPIIREEDGLAKSSRNVYLSKEERKASLAISQSIFLAEKLVREGEKNTSKIIQAMKDILEKEKLIKIDYIELVDFNTMENIENITDNVLGAVAAFVGKTRLIDNFLVQGLK</sequence>
<evidence type="ECO:0000255" key="1">
    <source>
        <dbReference type="HAMAP-Rule" id="MF_00158"/>
    </source>
</evidence>
<organism>
    <name type="scientific">Campylobacter jejuni subsp. jejuni serotype O:6 (strain 81116 / NCTC 11828)</name>
    <dbReference type="NCBI Taxonomy" id="407148"/>
    <lineage>
        <taxon>Bacteria</taxon>
        <taxon>Pseudomonadati</taxon>
        <taxon>Campylobacterota</taxon>
        <taxon>Epsilonproteobacteria</taxon>
        <taxon>Campylobacterales</taxon>
        <taxon>Campylobacteraceae</taxon>
        <taxon>Campylobacter</taxon>
    </lineage>
</organism>